<dbReference type="EMBL" id="BX571965">
    <property type="protein sequence ID" value="CAH37201.1"/>
    <property type="molecule type" value="Genomic_DNA"/>
</dbReference>
<dbReference type="RefSeq" id="WP_004197938.1">
    <property type="nucleotide sequence ID" value="NZ_CP009538.1"/>
</dbReference>
<dbReference type="RefSeq" id="YP_109784.1">
    <property type="nucleotide sequence ID" value="NC_006350.1"/>
</dbReference>
<dbReference type="SMR" id="Q63Q34"/>
<dbReference type="STRING" id="272560.BPSL3190"/>
<dbReference type="GeneID" id="93061809"/>
<dbReference type="KEGG" id="bps:BPSL3190"/>
<dbReference type="PATRIC" id="fig|272560.51.peg.2048"/>
<dbReference type="eggNOG" id="COG0099">
    <property type="taxonomic scope" value="Bacteria"/>
</dbReference>
<dbReference type="Proteomes" id="UP000000605">
    <property type="component" value="Chromosome 1"/>
</dbReference>
<dbReference type="GO" id="GO:0005829">
    <property type="term" value="C:cytosol"/>
    <property type="evidence" value="ECO:0007669"/>
    <property type="project" value="TreeGrafter"/>
</dbReference>
<dbReference type="GO" id="GO:0015935">
    <property type="term" value="C:small ribosomal subunit"/>
    <property type="evidence" value="ECO:0007669"/>
    <property type="project" value="TreeGrafter"/>
</dbReference>
<dbReference type="GO" id="GO:0019843">
    <property type="term" value="F:rRNA binding"/>
    <property type="evidence" value="ECO:0007669"/>
    <property type="project" value="UniProtKB-UniRule"/>
</dbReference>
<dbReference type="GO" id="GO:0003735">
    <property type="term" value="F:structural constituent of ribosome"/>
    <property type="evidence" value="ECO:0007669"/>
    <property type="project" value="InterPro"/>
</dbReference>
<dbReference type="GO" id="GO:0000049">
    <property type="term" value="F:tRNA binding"/>
    <property type="evidence" value="ECO:0007669"/>
    <property type="project" value="UniProtKB-UniRule"/>
</dbReference>
<dbReference type="GO" id="GO:0006412">
    <property type="term" value="P:translation"/>
    <property type="evidence" value="ECO:0007669"/>
    <property type="project" value="UniProtKB-UniRule"/>
</dbReference>
<dbReference type="FunFam" id="1.10.8.50:FF:000001">
    <property type="entry name" value="30S ribosomal protein S13"/>
    <property type="match status" value="1"/>
</dbReference>
<dbReference type="FunFam" id="4.10.910.10:FF:000001">
    <property type="entry name" value="30S ribosomal protein S13"/>
    <property type="match status" value="1"/>
</dbReference>
<dbReference type="Gene3D" id="1.10.8.50">
    <property type="match status" value="1"/>
</dbReference>
<dbReference type="Gene3D" id="4.10.910.10">
    <property type="entry name" value="30s ribosomal protein s13, domain 2"/>
    <property type="match status" value="1"/>
</dbReference>
<dbReference type="HAMAP" id="MF_01315">
    <property type="entry name" value="Ribosomal_uS13"/>
    <property type="match status" value="1"/>
</dbReference>
<dbReference type="InterPro" id="IPR027437">
    <property type="entry name" value="Rbsml_uS13_C"/>
</dbReference>
<dbReference type="InterPro" id="IPR001892">
    <property type="entry name" value="Ribosomal_uS13"/>
</dbReference>
<dbReference type="InterPro" id="IPR010979">
    <property type="entry name" value="Ribosomal_uS13-like_H2TH"/>
</dbReference>
<dbReference type="InterPro" id="IPR019980">
    <property type="entry name" value="Ribosomal_uS13_bac-type"/>
</dbReference>
<dbReference type="InterPro" id="IPR018269">
    <property type="entry name" value="Ribosomal_uS13_CS"/>
</dbReference>
<dbReference type="NCBIfam" id="TIGR03631">
    <property type="entry name" value="uS13_bact"/>
    <property type="match status" value="1"/>
</dbReference>
<dbReference type="PANTHER" id="PTHR10871">
    <property type="entry name" value="30S RIBOSOMAL PROTEIN S13/40S RIBOSOMAL PROTEIN S18"/>
    <property type="match status" value="1"/>
</dbReference>
<dbReference type="PANTHER" id="PTHR10871:SF1">
    <property type="entry name" value="SMALL RIBOSOMAL SUBUNIT PROTEIN US13M"/>
    <property type="match status" value="1"/>
</dbReference>
<dbReference type="Pfam" id="PF00416">
    <property type="entry name" value="Ribosomal_S13"/>
    <property type="match status" value="1"/>
</dbReference>
<dbReference type="PIRSF" id="PIRSF002134">
    <property type="entry name" value="Ribosomal_S13"/>
    <property type="match status" value="1"/>
</dbReference>
<dbReference type="SUPFAM" id="SSF46946">
    <property type="entry name" value="S13-like H2TH domain"/>
    <property type="match status" value="1"/>
</dbReference>
<dbReference type="PROSITE" id="PS00646">
    <property type="entry name" value="RIBOSOMAL_S13_1"/>
    <property type="match status" value="1"/>
</dbReference>
<dbReference type="PROSITE" id="PS50159">
    <property type="entry name" value="RIBOSOMAL_S13_2"/>
    <property type="match status" value="1"/>
</dbReference>
<sequence>MARIAGVNIPNHQHTEIGLTAIFGIGRTRARSICVASGVAFSKKVKDLTDADLEKLREEVGKFVVEGDLRREVTMNIKRLMDLGCYRGVRHRKGLPLRGQRTRTNARTRKGPRRAAQALKK</sequence>
<keyword id="KW-1185">Reference proteome</keyword>
<keyword id="KW-0687">Ribonucleoprotein</keyword>
<keyword id="KW-0689">Ribosomal protein</keyword>
<keyword id="KW-0694">RNA-binding</keyword>
<keyword id="KW-0699">rRNA-binding</keyword>
<keyword id="KW-0820">tRNA-binding</keyword>
<gene>
    <name evidence="1" type="primary">rpsM</name>
    <name type="ordered locus">BPSL3190</name>
</gene>
<comment type="function">
    <text evidence="1">Located at the top of the head of the 30S subunit, it contacts several helices of the 16S rRNA. In the 70S ribosome it contacts the 23S rRNA (bridge B1a) and protein L5 of the 50S subunit (bridge B1b), connecting the 2 subunits; these bridges are implicated in subunit movement. Contacts the tRNAs in the A and P-sites.</text>
</comment>
<comment type="subunit">
    <text evidence="1">Part of the 30S ribosomal subunit. Forms a loose heterodimer with protein S19. Forms two bridges to the 50S subunit in the 70S ribosome.</text>
</comment>
<comment type="similarity">
    <text evidence="1">Belongs to the universal ribosomal protein uS13 family.</text>
</comment>
<reference key="1">
    <citation type="journal article" date="2004" name="Proc. Natl. Acad. Sci. U.S.A.">
        <title>Genomic plasticity of the causative agent of melioidosis, Burkholderia pseudomallei.</title>
        <authorList>
            <person name="Holden M.T.G."/>
            <person name="Titball R.W."/>
            <person name="Peacock S.J."/>
            <person name="Cerdeno-Tarraga A.-M."/>
            <person name="Atkins T."/>
            <person name="Crossman L.C."/>
            <person name="Pitt T."/>
            <person name="Churcher C."/>
            <person name="Mungall K.L."/>
            <person name="Bentley S.D."/>
            <person name="Sebaihia M."/>
            <person name="Thomson N.R."/>
            <person name="Bason N."/>
            <person name="Beacham I.R."/>
            <person name="Brooks K."/>
            <person name="Brown K.A."/>
            <person name="Brown N.F."/>
            <person name="Challis G.L."/>
            <person name="Cherevach I."/>
            <person name="Chillingworth T."/>
            <person name="Cronin A."/>
            <person name="Crossett B."/>
            <person name="Davis P."/>
            <person name="DeShazer D."/>
            <person name="Feltwell T."/>
            <person name="Fraser A."/>
            <person name="Hance Z."/>
            <person name="Hauser H."/>
            <person name="Holroyd S."/>
            <person name="Jagels K."/>
            <person name="Keith K.E."/>
            <person name="Maddison M."/>
            <person name="Moule S."/>
            <person name="Price C."/>
            <person name="Quail M.A."/>
            <person name="Rabbinowitsch E."/>
            <person name="Rutherford K."/>
            <person name="Sanders M."/>
            <person name="Simmonds M."/>
            <person name="Songsivilai S."/>
            <person name="Stevens K."/>
            <person name="Tumapa S."/>
            <person name="Vesaratchavest M."/>
            <person name="Whitehead S."/>
            <person name="Yeats C."/>
            <person name="Barrell B.G."/>
            <person name="Oyston P.C.F."/>
            <person name="Parkhill J."/>
        </authorList>
    </citation>
    <scope>NUCLEOTIDE SEQUENCE [LARGE SCALE GENOMIC DNA]</scope>
    <source>
        <strain>K96243</strain>
    </source>
</reference>
<evidence type="ECO:0000255" key="1">
    <source>
        <dbReference type="HAMAP-Rule" id="MF_01315"/>
    </source>
</evidence>
<evidence type="ECO:0000256" key="2">
    <source>
        <dbReference type="SAM" id="MobiDB-lite"/>
    </source>
</evidence>
<evidence type="ECO:0000305" key="3"/>
<organism>
    <name type="scientific">Burkholderia pseudomallei (strain K96243)</name>
    <dbReference type="NCBI Taxonomy" id="272560"/>
    <lineage>
        <taxon>Bacteria</taxon>
        <taxon>Pseudomonadati</taxon>
        <taxon>Pseudomonadota</taxon>
        <taxon>Betaproteobacteria</taxon>
        <taxon>Burkholderiales</taxon>
        <taxon>Burkholderiaceae</taxon>
        <taxon>Burkholderia</taxon>
        <taxon>pseudomallei group</taxon>
    </lineage>
</organism>
<protein>
    <recommendedName>
        <fullName evidence="1">Small ribosomal subunit protein uS13</fullName>
    </recommendedName>
    <alternativeName>
        <fullName evidence="3">30S ribosomal protein S13</fullName>
    </alternativeName>
</protein>
<name>RS13_BURPS</name>
<proteinExistence type="inferred from homology"/>
<accession>Q63Q34</accession>
<feature type="chain" id="PRO_0000230485" description="Small ribosomal subunit protein uS13">
    <location>
        <begin position="1"/>
        <end position="121"/>
    </location>
</feature>
<feature type="region of interest" description="Disordered" evidence="2">
    <location>
        <begin position="94"/>
        <end position="121"/>
    </location>
</feature>